<organism>
    <name type="scientific">Stenotrophomonas maltophilia (strain R551-3)</name>
    <dbReference type="NCBI Taxonomy" id="391008"/>
    <lineage>
        <taxon>Bacteria</taxon>
        <taxon>Pseudomonadati</taxon>
        <taxon>Pseudomonadota</taxon>
        <taxon>Gammaproteobacteria</taxon>
        <taxon>Lysobacterales</taxon>
        <taxon>Lysobacteraceae</taxon>
        <taxon>Stenotrophomonas</taxon>
        <taxon>Stenotrophomonas maltophilia group</taxon>
    </lineage>
</organism>
<dbReference type="EC" id="3.5.4.13" evidence="1"/>
<dbReference type="EMBL" id="CP001111">
    <property type="protein sequence ID" value="ACF52569.1"/>
    <property type="molecule type" value="Genomic_DNA"/>
</dbReference>
<dbReference type="RefSeq" id="WP_012511735.1">
    <property type="nucleotide sequence ID" value="NC_011071.1"/>
</dbReference>
<dbReference type="SMR" id="B4SQX4"/>
<dbReference type="STRING" id="391008.Smal_2869"/>
<dbReference type="KEGG" id="smt:Smal_2869"/>
<dbReference type="eggNOG" id="COG0717">
    <property type="taxonomic scope" value="Bacteria"/>
</dbReference>
<dbReference type="HOGENOM" id="CLU_087476_4_0_6"/>
<dbReference type="OrthoDB" id="9780956at2"/>
<dbReference type="UniPathway" id="UPA00610">
    <property type="reaction ID" value="UER00665"/>
</dbReference>
<dbReference type="Proteomes" id="UP000001867">
    <property type="component" value="Chromosome"/>
</dbReference>
<dbReference type="GO" id="GO:0008829">
    <property type="term" value="F:dCTP deaminase activity"/>
    <property type="evidence" value="ECO:0007669"/>
    <property type="project" value="UniProtKB-UniRule"/>
</dbReference>
<dbReference type="GO" id="GO:0000166">
    <property type="term" value="F:nucleotide binding"/>
    <property type="evidence" value="ECO:0007669"/>
    <property type="project" value="UniProtKB-KW"/>
</dbReference>
<dbReference type="GO" id="GO:0006226">
    <property type="term" value="P:dUMP biosynthetic process"/>
    <property type="evidence" value="ECO:0007669"/>
    <property type="project" value="UniProtKB-UniPathway"/>
</dbReference>
<dbReference type="GO" id="GO:0006229">
    <property type="term" value="P:dUTP biosynthetic process"/>
    <property type="evidence" value="ECO:0007669"/>
    <property type="project" value="UniProtKB-UniRule"/>
</dbReference>
<dbReference type="GO" id="GO:0015949">
    <property type="term" value="P:nucleobase-containing small molecule interconversion"/>
    <property type="evidence" value="ECO:0007669"/>
    <property type="project" value="TreeGrafter"/>
</dbReference>
<dbReference type="CDD" id="cd07557">
    <property type="entry name" value="trimeric_dUTPase"/>
    <property type="match status" value="1"/>
</dbReference>
<dbReference type="FunFam" id="2.70.40.10:FF:000001">
    <property type="entry name" value="dCTP deaminase"/>
    <property type="match status" value="1"/>
</dbReference>
<dbReference type="Gene3D" id="2.70.40.10">
    <property type="match status" value="1"/>
</dbReference>
<dbReference type="HAMAP" id="MF_00146">
    <property type="entry name" value="dCTP_deaminase"/>
    <property type="match status" value="1"/>
</dbReference>
<dbReference type="InterPro" id="IPR011962">
    <property type="entry name" value="dCTP_deaminase"/>
</dbReference>
<dbReference type="InterPro" id="IPR036157">
    <property type="entry name" value="dUTPase-like_sf"/>
</dbReference>
<dbReference type="InterPro" id="IPR033704">
    <property type="entry name" value="dUTPase_trimeric"/>
</dbReference>
<dbReference type="NCBIfam" id="TIGR02274">
    <property type="entry name" value="dCTP_deam"/>
    <property type="match status" value="1"/>
</dbReference>
<dbReference type="PANTHER" id="PTHR42680">
    <property type="entry name" value="DCTP DEAMINASE"/>
    <property type="match status" value="1"/>
</dbReference>
<dbReference type="PANTHER" id="PTHR42680:SF3">
    <property type="entry name" value="DCTP DEAMINASE"/>
    <property type="match status" value="1"/>
</dbReference>
<dbReference type="Pfam" id="PF22769">
    <property type="entry name" value="DCD"/>
    <property type="match status" value="1"/>
</dbReference>
<dbReference type="SUPFAM" id="SSF51283">
    <property type="entry name" value="dUTPase-like"/>
    <property type="match status" value="1"/>
</dbReference>
<sequence length="190" mass="21316">MSIKSDRWIRRMSEQHGMIEPFEAGQVKQANGERIVSYGTSSYGYDVRCSREFKVFTNINSTIVDPKHFDPGSFVDIVGDECIIPPNSFALARTVEYFRIPRDTLVVCLGKSTYARCGIIVNVTPLEPEWEGHVTLEFSNTTPLPARIYANEGVAQMLFFQAAADDVCETSYRDRGGKYQGQTGVTLPRT</sequence>
<reference key="1">
    <citation type="submission" date="2008-06" db="EMBL/GenBank/DDBJ databases">
        <title>Complete sequence of Stenotrophomonas maltophilia R551-3.</title>
        <authorList>
            <consortium name="US DOE Joint Genome Institute"/>
            <person name="Lucas S."/>
            <person name="Copeland A."/>
            <person name="Lapidus A."/>
            <person name="Glavina del Rio T."/>
            <person name="Dalin E."/>
            <person name="Tice H."/>
            <person name="Pitluck S."/>
            <person name="Chain P."/>
            <person name="Malfatti S."/>
            <person name="Shin M."/>
            <person name="Vergez L."/>
            <person name="Lang D."/>
            <person name="Schmutz J."/>
            <person name="Larimer F."/>
            <person name="Land M."/>
            <person name="Hauser L."/>
            <person name="Kyrpides N."/>
            <person name="Mikhailova N."/>
            <person name="Taghavi S."/>
            <person name="Monchy S."/>
            <person name="Newman L."/>
            <person name="Vangronsveld J."/>
            <person name="van der Lelie D."/>
            <person name="Richardson P."/>
        </authorList>
    </citation>
    <scope>NUCLEOTIDE SEQUENCE [LARGE SCALE GENOMIC DNA]</scope>
    <source>
        <strain>R551-3</strain>
    </source>
</reference>
<proteinExistence type="inferred from homology"/>
<comment type="function">
    <text evidence="1">Catalyzes the deamination of dCTP to dUTP.</text>
</comment>
<comment type="catalytic activity">
    <reaction evidence="1">
        <text>dCTP + H2O + H(+) = dUTP + NH4(+)</text>
        <dbReference type="Rhea" id="RHEA:22680"/>
        <dbReference type="ChEBI" id="CHEBI:15377"/>
        <dbReference type="ChEBI" id="CHEBI:15378"/>
        <dbReference type="ChEBI" id="CHEBI:28938"/>
        <dbReference type="ChEBI" id="CHEBI:61481"/>
        <dbReference type="ChEBI" id="CHEBI:61555"/>
        <dbReference type="EC" id="3.5.4.13"/>
    </reaction>
</comment>
<comment type="pathway">
    <text evidence="1">Pyrimidine metabolism; dUMP biosynthesis; dUMP from dCTP (dUTP route): step 1/2.</text>
</comment>
<comment type="subunit">
    <text evidence="1">Homotrimer.</text>
</comment>
<comment type="similarity">
    <text evidence="1">Belongs to the dCTP deaminase family.</text>
</comment>
<gene>
    <name evidence="1" type="primary">dcd</name>
    <name type="ordered locus">Smal_2869</name>
</gene>
<keyword id="KW-0378">Hydrolase</keyword>
<keyword id="KW-0546">Nucleotide metabolism</keyword>
<keyword id="KW-0547">Nucleotide-binding</keyword>
<feature type="chain" id="PRO_1000096456" description="dCTP deaminase">
    <location>
        <begin position="1"/>
        <end position="190"/>
    </location>
</feature>
<feature type="active site" description="Proton donor/acceptor" evidence="1">
    <location>
        <position position="137"/>
    </location>
</feature>
<feature type="binding site" evidence="1">
    <location>
        <begin position="111"/>
        <end position="116"/>
    </location>
    <ligand>
        <name>dCTP</name>
        <dbReference type="ChEBI" id="CHEBI:61481"/>
    </ligand>
</feature>
<feature type="binding site" evidence="1">
    <location>
        <begin position="135"/>
        <end position="137"/>
    </location>
    <ligand>
        <name>dCTP</name>
        <dbReference type="ChEBI" id="CHEBI:61481"/>
    </ligand>
</feature>
<feature type="binding site" evidence="1">
    <location>
        <position position="156"/>
    </location>
    <ligand>
        <name>dCTP</name>
        <dbReference type="ChEBI" id="CHEBI:61481"/>
    </ligand>
</feature>
<feature type="binding site" evidence="1">
    <location>
        <position position="172"/>
    </location>
    <ligand>
        <name>dCTP</name>
        <dbReference type="ChEBI" id="CHEBI:61481"/>
    </ligand>
</feature>
<feature type="binding site" evidence="1">
    <location>
        <position position="182"/>
    </location>
    <ligand>
        <name>dCTP</name>
        <dbReference type="ChEBI" id="CHEBI:61481"/>
    </ligand>
</feature>
<evidence type="ECO:0000255" key="1">
    <source>
        <dbReference type="HAMAP-Rule" id="MF_00146"/>
    </source>
</evidence>
<protein>
    <recommendedName>
        <fullName evidence="1">dCTP deaminase</fullName>
        <ecNumber evidence="1">3.5.4.13</ecNumber>
    </recommendedName>
    <alternativeName>
        <fullName evidence="1">Deoxycytidine triphosphate deaminase</fullName>
    </alternativeName>
</protein>
<accession>B4SQX4</accession>
<name>DCD_STRM5</name>